<name>EF105_ARATH</name>
<gene>
    <name type="primary">ERF105</name>
    <name type="ordered locus">At5g51190</name>
    <name type="ORF">MWD22.13</name>
</gene>
<protein>
    <recommendedName>
        <fullName>Ethylene-responsive transcription factor ERF105</fullName>
    </recommendedName>
</protein>
<accession>Q8VY90</accession>
<accession>Q8LD04</accession>
<accession>Q9LU55</accession>
<keyword id="KW-0010">Activator</keyword>
<keyword id="KW-0238">DNA-binding</keyword>
<keyword id="KW-0936">Ethylene signaling pathway</keyword>
<keyword id="KW-0539">Nucleus</keyword>
<keyword id="KW-1185">Reference proteome</keyword>
<keyword id="KW-0804">Transcription</keyword>
<keyword id="KW-0805">Transcription regulation</keyword>
<evidence type="ECO:0000250" key="1"/>
<evidence type="ECO:0000255" key="2">
    <source>
        <dbReference type="PROSITE-ProRule" id="PRU00366"/>
    </source>
</evidence>
<evidence type="ECO:0000305" key="3"/>
<reference key="1">
    <citation type="journal article" date="2000" name="DNA Res.">
        <title>Structural analysis of Arabidopsis thaliana chromosome 5. X. Sequence features of the regions of 3,076,755 bp covered by sixty P1 and TAC clones.</title>
        <authorList>
            <person name="Sato S."/>
            <person name="Nakamura Y."/>
            <person name="Kaneko T."/>
            <person name="Katoh T."/>
            <person name="Asamizu E."/>
            <person name="Kotani H."/>
            <person name="Tabata S."/>
        </authorList>
    </citation>
    <scope>NUCLEOTIDE SEQUENCE [LARGE SCALE GENOMIC DNA]</scope>
    <source>
        <strain>cv. Columbia</strain>
    </source>
</reference>
<reference key="2">
    <citation type="journal article" date="2017" name="Plant J.">
        <title>Araport11: a complete reannotation of the Arabidopsis thaliana reference genome.</title>
        <authorList>
            <person name="Cheng C.Y."/>
            <person name="Krishnakumar V."/>
            <person name="Chan A.P."/>
            <person name="Thibaud-Nissen F."/>
            <person name="Schobel S."/>
            <person name="Town C.D."/>
        </authorList>
    </citation>
    <scope>GENOME REANNOTATION</scope>
    <source>
        <strain>cv. Columbia</strain>
    </source>
</reference>
<reference key="3">
    <citation type="journal article" date="2003" name="Science">
        <title>Empirical analysis of transcriptional activity in the Arabidopsis genome.</title>
        <authorList>
            <person name="Yamada K."/>
            <person name="Lim J."/>
            <person name="Dale J.M."/>
            <person name="Chen H."/>
            <person name="Shinn P."/>
            <person name="Palm C.J."/>
            <person name="Southwick A.M."/>
            <person name="Wu H.C."/>
            <person name="Kim C.J."/>
            <person name="Nguyen M."/>
            <person name="Pham P.K."/>
            <person name="Cheuk R.F."/>
            <person name="Karlin-Newmann G."/>
            <person name="Liu S.X."/>
            <person name="Lam B."/>
            <person name="Sakano H."/>
            <person name="Wu T."/>
            <person name="Yu G."/>
            <person name="Miranda M."/>
            <person name="Quach H.L."/>
            <person name="Tripp M."/>
            <person name="Chang C.H."/>
            <person name="Lee J.M."/>
            <person name="Toriumi M.J."/>
            <person name="Chan M.M."/>
            <person name="Tang C.C."/>
            <person name="Onodera C.S."/>
            <person name="Deng J.M."/>
            <person name="Akiyama K."/>
            <person name="Ansari Y."/>
            <person name="Arakawa T."/>
            <person name="Banh J."/>
            <person name="Banno F."/>
            <person name="Bowser L."/>
            <person name="Brooks S.Y."/>
            <person name="Carninci P."/>
            <person name="Chao Q."/>
            <person name="Choy N."/>
            <person name="Enju A."/>
            <person name="Goldsmith A.D."/>
            <person name="Gurjal M."/>
            <person name="Hansen N.F."/>
            <person name="Hayashizaki Y."/>
            <person name="Johnson-Hopson C."/>
            <person name="Hsuan V.W."/>
            <person name="Iida K."/>
            <person name="Karnes M."/>
            <person name="Khan S."/>
            <person name="Koesema E."/>
            <person name="Ishida J."/>
            <person name="Jiang P.X."/>
            <person name="Jones T."/>
            <person name="Kawai J."/>
            <person name="Kamiya A."/>
            <person name="Meyers C."/>
            <person name="Nakajima M."/>
            <person name="Narusaka M."/>
            <person name="Seki M."/>
            <person name="Sakurai T."/>
            <person name="Satou M."/>
            <person name="Tamse R."/>
            <person name="Vaysberg M."/>
            <person name="Wallender E.K."/>
            <person name="Wong C."/>
            <person name="Yamamura Y."/>
            <person name="Yuan S."/>
            <person name="Shinozaki K."/>
            <person name="Davis R.W."/>
            <person name="Theologis A."/>
            <person name="Ecker J.R."/>
        </authorList>
    </citation>
    <scope>NUCLEOTIDE SEQUENCE [LARGE SCALE MRNA]</scope>
    <source>
        <strain>cv. Columbia</strain>
    </source>
</reference>
<reference key="4">
    <citation type="submission" date="2002-03" db="EMBL/GenBank/DDBJ databases">
        <title>Full-length cDNA from Arabidopsis thaliana.</title>
        <authorList>
            <person name="Brover V.V."/>
            <person name="Troukhan M.E."/>
            <person name="Alexandrov N.A."/>
            <person name="Lu Y.-P."/>
            <person name="Flavell R.B."/>
            <person name="Feldmann K.A."/>
        </authorList>
    </citation>
    <scope>NUCLEOTIDE SEQUENCE [LARGE SCALE MRNA]</scope>
</reference>
<reference key="5">
    <citation type="journal article" date="2006" name="Plant Physiol.">
        <title>Genome-wide analysis of the ERF gene family in Arabidopsis and rice.</title>
        <authorList>
            <person name="Nakano T."/>
            <person name="Suzuki K."/>
            <person name="Fujimura T."/>
            <person name="Shinshi H."/>
        </authorList>
    </citation>
    <scope>GENE FAMILY</scope>
    <scope>NOMENCLATURE</scope>
</reference>
<dbReference type="EMBL" id="AB023044">
    <property type="protein sequence ID" value="BAA97381.1"/>
    <property type="status" value="ALT_SEQ"/>
    <property type="molecule type" value="Genomic_DNA"/>
</dbReference>
<dbReference type="EMBL" id="CP002688">
    <property type="protein sequence ID" value="AED96050.1"/>
    <property type="molecule type" value="Genomic_DNA"/>
</dbReference>
<dbReference type="EMBL" id="AY072345">
    <property type="protein sequence ID" value="AAL61952.1"/>
    <property type="molecule type" value="mRNA"/>
</dbReference>
<dbReference type="EMBL" id="AY114590">
    <property type="protein sequence ID" value="AAM47909.1"/>
    <property type="molecule type" value="mRNA"/>
</dbReference>
<dbReference type="EMBL" id="AY086290">
    <property type="protein sequence ID" value="AAM64362.1"/>
    <property type="molecule type" value="mRNA"/>
</dbReference>
<dbReference type="RefSeq" id="NP_568755.1">
    <property type="nucleotide sequence ID" value="NM_124498.2"/>
</dbReference>
<dbReference type="SMR" id="Q8VY90"/>
<dbReference type="BioGRID" id="20438">
    <property type="interactions" value="8"/>
</dbReference>
<dbReference type="FunCoup" id="Q8VY90">
    <property type="interactions" value="16"/>
</dbReference>
<dbReference type="STRING" id="3702.Q8VY90"/>
<dbReference type="iPTMnet" id="Q8VY90"/>
<dbReference type="PaxDb" id="3702-AT5G51190.1"/>
<dbReference type="ProteomicsDB" id="224730"/>
<dbReference type="EnsemblPlants" id="AT5G51190.1">
    <property type="protein sequence ID" value="AT5G51190.1"/>
    <property type="gene ID" value="AT5G51190"/>
</dbReference>
<dbReference type="GeneID" id="835193"/>
<dbReference type="Gramene" id="AT5G51190.1">
    <property type="protein sequence ID" value="AT5G51190.1"/>
    <property type="gene ID" value="AT5G51190"/>
</dbReference>
<dbReference type="KEGG" id="ath:AT5G51190"/>
<dbReference type="Araport" id="AT5G51190"/>
<dbReference type="TAIR" id="AT5G51190">
    <property type="gene designation" value="ERF105"/>
</dbReference>
<dbReference type="eggNOG" id="ENOG502RXE3">
    <property type="taxonomic scope" value="Eukaryota"/>
</dbReference>
<dbReference type="HOGENOM" id="CLU_058713_0_0_1"/>
<dbReference type="InParanoid" id="Q8VY90"/>
<dbReference type="OMA" id="NWSTIWD"/>
<dbReference type="PhylomeDB" id="Q8VY90"/>
<dbReference type="PRO" id="PR:Q8VY90"/>
<dbReference type="Proteomes" id="UP000006548">
    <property type="component" value="Chromosome 5"/>
</dbReference>
<dbReference type="ExpressionAtlas" id="Q8VY90">
    <property type="expression patterns" value="differential"/>
</dbReference>
<dbReference type="GO" id="GO:0005634">
    <property type="term" value="C:nucleus"/>
    <property type="evidence" value="ECO:0000314"/>
    <property type="project" value="TAIR"/>
</dbReference>
<dbReference type="GO" id="GO:0003700">
    <property type="term" value="F:DNA-binding transcription factor activity"/>
    <property type="evidence" value="ECO:0000250"/>
    <property type="project" value="TAIR"/>
</dbReference>
<dbReference type="GO" id="GO:0000976">
    <property type="term" value="F:transcription cis-regulatory region binding"/>
    <property type="evidence" value="ECO:0000353"/>
    <property type="project" value="TAIR"/>
</dbReference>
<dbReference type="GO" id="GO:0009873">
    <property type="term" value="P:ethylene-activated signaling pathway"/>
    <property type="evidence" value="ECO:0007669"/>
    <property type="project" value="UniProtKB-KW"/>
</dbReference>
<dbReference type="GO" id="GO:0009408">
    <property type="term" value="P:response to heat"/>
    <property type="evidence" value="ECO:0000270"/>
    <property type="project" value="TAIR"/>
</dbReference>
<dbReference type="CDD" id="cd00018">
    <property type="entry name" value="AP2"/>
    <property type="match status" value="1"/>
</dbReference>
<dbReference type="FunFam" id="3.30.730.10:FF:000001">
    <property type="entry name" value="Ethylene-responsive transcription factor 2"/>
    <property type="match status" value="1"/>
</dbReference>
<dbReference type="Gene3D" id="3.30.730.10">
    <property type="entry name" value="AP2/ERF domain"/>
    <property type="match status" value="1"/>
</dbReference>
<dbReference type="InterPro" id="IPR001471">
    <property type="entry name" value="AP2/ERF_dom"/>
</dbReference>
<dbReference type="InterPro" id="IPR036955">
    <property type="entry name" value="AP2/ERF_dom_sf"/>
</dbReference>
<dbReference type="InterPro" id="IPR016177">
    <property type="entry name" value="DNA-bd_dom_sf"/>
</dbReference>
<dbReference type="InterPro" id="IPR044808">
    <property type="entry name" value="ERF_plant"/>
</dbReference>
<dbReference type="PANTHER" id="PTHR31190">
    <property type="entry name" value="DNA-BINDING DOMAIN"/>
    <property type="match status" value="1"/>
</dbReference>
<dbReference type="PANTHER" id="PTHR31190:SF499">
    <property type="entry name" value="ETHYLENE-RESPONSIVE TRANSCRIPTION FACTOR ERF105"/>
    <property type="match status" value="1"/>
</dbReference>
<dbReference type="Pfam" id="PF00847">
    <property type="entry name" value="AP2"/>
    <property type="match status" value="1"/>
</dbReference>
<dbReference type="PRINTS" id="PR00367">
    <property type="entry name" value="ETHRSPELEMNT"/>
</dbReference>
<dbReference type="SMART" id="SM00380">
    <property type="entry name" value="AP2"/>
    <property type="match status" value="1"/>
</dbReference>
<dbReference type="SUPFAM" id="SSF54171">
    <property type="entry name" value="DNA-binding domain"/>
    <property type="match status" value="1"/>
</dbReference>
<dbReference type="PROSITE" id="PS51032">
    <property type="entry name" value="AP2_ERF"/>
    <property type="match status" value="1"/>
</dbReference>
<feature type="chain" id="PRO_0000290418" description="Ethylene-responsive transcription factor ERF105">
    <location>
        <begin position="1"/>
        <end position="221"/>
    </location>
</feature>
<feature type="DNA-binding region" description="AP2/ERF" evidence="2">
    <location>
        <begin position="71"/>
        <end position="129"/>
    </location>
</feature>
<feature type="sequence conflict" description="In Ref. 4; AAM64362." evidence="3" ref="4">
    <original>R</original>
    <variation>H</variation>
    <location>
        <position position="165"/>
    </location>
</feature>
<proteinExistence type="evidence at transcript level"/>
<comment type="function">
    <text evidence="1">Probably acts as a transcriptional activator. Binds to the GCC-box pathogenesis-related promoter element. May be involved in the regulation of gene expression by stress factors and by components of stress signal transduction pathways (By similarity).</text>
</comment>
<comment type="subcellular location">
    <subcellularLocation>
        <location evidence="3">Nucleus</location>
    </subcellularLocation>
</comment>
<comment type="similarity">
    <text evidence="3">Belongs to the AP2/ERF transcription factor family. ERF subfamily.</text>
</comment>
<comment type="sequence caution" evidence="3">
    <conflict type="erroneous gene model prediction">
        <sequence resource="EMBL-CDS" id="BAA97381"/>
    </conflict>
</comment>
<sequence>MASSHQQQQEQDQSALDLITQHLLTDFPSLDTFASTIHHCTTSTLSQRKPPLATIAVPTTAPVVQENDQRHYRGVRRRPWGKYAAEIRDPNKKGVRVWLGTFDTAMEAARGYDKAAFKLRGSKAILNFPLEAGKHEDLGDNKKTISLKAKRKRQVTEDESQLISRKAVKREEAQVQADACPLTPSSWKGFWDGADSKDMGIFSVPLLSPCPSLGHSQLVVT</sequence>
<organism>
    <name type="scientific">Arabidopsis thaliana</name>
    <name type="common">Mouse-ear cress</name>
    <dbReference type="NCBI Taxonomy" id="3702"/>
    <lineage>
        <taxon>Eukaryota</taxon>
        <taxon>Viridiplantae</taxon>
        <taxon>Streptophyta</taxon>
        <taxon>Embryophyta</taxon>
        <taxon>Tracheophyta</taxon>
        <taxon>Spermatophyta</taxon>
        <taxon>Magnoliopsida</taxon>
        <taxon>eudicotyledons</taxon>
        <taxon>Gunneridae</taxon>
        <taxon>Pentapetalae</taxon>
        <taxon>rosids</taxon>
        <taxon>malvids</taxon>
        <taxon>Brassicales</taxon>
        <taxon>Brassicaceae</taxon>
        <taxon>Camelineae</taxon>
        <taxon>Arabidopsis</taxon>
    </lineage>
</organism>